<organism>
    <name type="scientific">Saccharolobus solfataricus (strain ATCC 35092 / DSM 1617 / JCM 11322 / P2)</name>
    <name type="common">Sulfolobus solfataricus</name>
    <dbReference type="NCBI Taxonomy" id="273057"/>
    <lineage>
        <taxon>Archaea</taxon>
        <taxon>Thermoproteota</taxon>
        <taxon>Thermoprotei</taxon>
        <taxon>Sulfolobales</taxon>
        <taxon>Sulfolobaceae</taxon>
        <taxon>Saccharolobus</taxon>
    </lineage>
</organism>
<proteinExistence type="inferred from homology"/>
<name>DCD_SACS2</name>
<accession>Q980T7</accession>
<gene>
    <name evidence="1" type="primary">dcd</name>
    <name type="ordered locus">SSO0190</name>
</gene>
<dbReference type="EC" id="3.5.4.13" evidence="1"/>
<dbReference type="EMBL" id="AE006641">
    <property type="protein sequence ID" value="AAK40536.1"/>
    <property type="status" value="ALT_INIT"/>
    <property type="molecule type" value="Genomic_DNA"/>
</dbReference>
<dbReference type="PIR" id="A90160">
    <property type="entry name" value="A90160"/>
</dbReference>
<dbReference type="RefSeq" id="WP_029552540.1">
    <property type="nucleotide sequence ID" value="NC_002754.1"/>
</dbReference>
<dbReference type="SMR" id="Q980T7"/>
<dbReference type="FunCoup" id="Q980T7">
    <property type="interactions" value="22"/>
</dbReference>
<dbReference type="STRING" id="273057.SSO0190"/>
<dbReference type="PaxDb" id="273057-SSO0190"/>
<dbReference type="EnsemblBacteria" id="AAK40536">
    <property type="protein sequence ID" value="AAK40536"/>
    <property type="gene ID" value="SSO0190"/>
</dbReference>
<dbReference type="GeneID" id="44129159"/>
<dbReference type="KEGG" id="sso:SSO0190"/>
<dbReference type="PATRIC" id="fig|273057.12.peg.189"/>
<dbReference type="eggNOG" id="arCOG04048">
    <property type="taxonomic scope" value="Archaea"/>
</dbReference>
<dbReference type="HOGENOM" id="CLU_087476_3_0_2"/>
<dbReference type="InParanoid" id="Q980T7"/>
<dbReference type="PhylomeDB" id="Q980T7"/>
<dbReference type="UniPathway" id="UPA00610">
    <property type="reaction ID" value="UER00665"/>
</dbReference>
<dbReference type="Proteomes" id="UP000001974">
    <property type="component" value="Chromosome"/>
</dbReference>
<dbReference type="GO" id="GO:0008829">
    <property type="term" value="F:dCTP deaminase activity"/>
    <property type="evidence" value="ECO:0007669"/>
    <property type="project" value="UniProtKB-UniRule"/>
</dbReference>
<dbReference type="GO" id="GO:0000166">
    <property type="term" value="F:nucleotide binding"/>
    <property type="evidence" value="ECO:0007669"/>
    <property type="project" value="UniProtKB-KW"/>
</dbReference>
<dbReference type="GO" id="GO:0006226">
    <property type="term" value="P:dUMP biosynthetic process"/>
    <property type="evidence" value="ECO:0007669"/>
    <property type="project" value="UniProtKB-UniPathway"/>
</dbReference>
<dbReference type="GO" id="GO:0006229">
    <property type="term" value="P:dUTP biosynthetic process"/>
    <property type="evidence" value="ECO:0007669"/>
    <property type="project" value="UniProtKB-UniRule"/>
</dbReference>
<dbReference type="CDD" id="cd07557">
    <property type="entry name" value="trimeric_dUTPase"/>
    <property type="match status" value="1"/>
</dbReference>
<dbReference type="Gene3D" id="2.70.40.10">
    <property type="match status" value="1"/>
</dbReference>
<dbReference type="HAMAP" id="MF_00146">
    <property type="entry name" value="dCTP_deaminase"/>
    <property type="match status" value="1"/>
</dbReference>
<dbReference type="InterPro" id="IPR011962">
    <property type="entry name" value="dCTP_deaminase"/>
</dbReference>
<dbReference type="InterPro" id="IPR036157">
    <property type="entry name" value="dUTPase-like_sf"/>
</dbReference>
<dbReference type="InterPro" id="IPR033704">
    <property type="entry name" value="dUTPase_trimeric"/>
</dbReference>
<dbReference type="NCBIfam" id="TIGR02274">
    <property type="entry name" value="dCTP_deam"/>
    <property type="match status" value="1"/>
</dbReference>
<dbReference type="PANTHER" id="PTHR42680">
    <property type="entry name" value="DCTP DEAMINASE"/>
    <property type="match status" value="1"/>
</dbReference>
<dbReference type="PANTHER" id="PTHR42680:SF3">
    <property type="entry name" value="DCTP DEAMINASE"/>
    <property type="match status" value="1"/>
</dbReference>
<dbReference type="Pfam" id="PF22769">
    <property type="entry name" value="DCD"/>
    <property type="match status" value="1"/>
</dbReference>
<dbReference type="SUPFAM" id="SSF51283">
    <property type="entry name" value="dUTPase-like"/>
    <property type="match status" value="1"/>
</dbReference>
<comment type="function">
    <text evidence="1">Catalyzes the deamination of dCTP to dUTP.</text>
</comment>
<comment type="catalytic activity">
    <reaction evidence="1">
        <text>dCTP + H2O + H(+) = dUTP + NH4(+)</text>
        <dbReference type="Rhea" id="RHEA:22680"/>
        <dbReference type="ChEBI" id="CHEBI:15377"/>
        <dbReference type="ChEBI" id="CHEBI:15378"/>
        <dbReference type="ChEBI" id="CHEBI:28938"/>
        <dbReference type="ChEBI" id="CHEBI:61481"/>
        <dbReference type="ChEBI" id="CHEBI:61555"/>
        <dbReference type="EC" id="3.5.4.13"/>
    </reaction>
</comment>
<comment type="pathway">
    <text evidence="1">Pyrimidine metabolism; dUMP biosynthesis; dUMP from dCTP (dUTP route): step 1/2.</text>
</comment>
<comment type="subunit">
    <text evidence="1">Homotrimer.</text>
</comment>
<comment type="similarity">
    <text evidence="1">Belongs to the dCTP deaminase family.</text>
</comment>
<comment type="sequence caution" evidence="2">
    <conflict type="erroneous initiation">
        <sequence resource="EMBL-CDS" id="AAK40536"/>
    </conflict>
</comment>
<keyword id="KW-0378">Hydrolase</keyword>
<keyword id="KW-0546">Nucleotide metabolism</keyword>
<keyword id="KW-0547">Nucleotide-binding</keyword>
<keyword id="KW-1185">Reference proteome</keyword>
<feature type="chain" id="PRO_0000156040" description="dCTP deaminase">
    <location>
        <begin position="1"/>
        <end position="184"/>
    </location>
</feature>
<feature type="active site" description="Proton donor/acceptor" evidence="1">
    <location>
        <position position="123"/>
    </location>
</feature>
<feature type="binding site" evidence="1">
    <location>
        <begin position="97"/>
        <end position="102"/>
    </location>
    <ligand>
        <name>dCTP</name>
        <dbReference type="ChEBI" id="CHEBI:61481"/>
    </ligand>
</feature>
<feature type="binding site" evidence="1">
    <location>
        <position position="113"/>
    </location>
    <ligand>
        <name>dCTP</name>
        <dbReference type="ChEBI" id="CHEBI:61481"/>
    </ligand>
</feature>
<feature type="binding site" evidence="1">
    <location>
        <position position="155"/>
    </location>
    <ligand>
        <name>dCTP</name>
        <dbReference type="ChEBI" id="CHEBI:61481"/>
    </ligand>
</feature>
<feature type="binding site" evidence="1">
    <location>
        <position position="162"/>
    </location>
    <ligand>
        <name>dCTP</name>
        <dbReference type="ChEBI" id="CHEBI:61481"/>
    </ligand>
</feature>
<protein>
    <recommendedName>
        <fullName evidence="1">dCTP deaminase</fullName>
        <ecNumber evidence="1">3.5.4.13</ecNumber>
    </recommendedName>
    <alternativeName>
        <fullName evidence="1">Deoxycytidine triphosphate deaminase</fullName>
    </alternativeName>
</protein>
<sequence>MILSDRDLKYYLEKSWIKIQPLREDTIRENGVDLRVGNEIARFKKTDKIFDPDNPDPSFFQTEKGEEFIIQPYEHVLLTTEEYIELNNDVMAFVNLRSTFARLGLFIPPTIVDAGFKGQVTIEVVGSSFPVKLKRSTRFIHLIFARTLTPVEYPYQGKYQGQKGVTLPKFNSQISSFYYQHQSI</sequence>
<evidence type="ECO:0000255" key="1">
    <source>
        <dbReference type="HAMAP-Rule" id="MF_00146"/>
    </source>
</evidence>
<evidence type="ECO:0000305" key="2"/>
<reference key="1">
    <citation type="journal article" date="2001" name="Proc. Natl. Acad. Sci. U.S.A.">
        <title>The complete genome of the crenarchaeon Sulfolobus solfataricus P2.</title>
        <authorList>
            <person name="She Q."/>
            <person name="Singh R.K."/>
            <person name="Confalonieri F."/>
            <person name="Zivanovic Y."/>
            <person name="Allard G."/>
            <person name="Awayez M.J."/>
            <person name="Chan-Weiher C.C.-Y."/>
            <person name="Clausen I.G."/>
            <person name="Curtis B.A."/>
            <person name="De Moors A."/>
            <person name="Erauso G."/>
            <person name="Fletcher C."/>
            <person name="Gordon P.M.K."/>
            <person name="Heikamp-de Jong I."/>
            <person name="Jeffries A.C."/>
            <person name="Kozera C.J."/>
            <person name="Medina N."/>
            <person name="Peng X."/>
            <person name="Thi-Ngoc H.P."/>
            <person name="Redder P."/>
            <person name="Schenk M.E."/>
            <person name="Theriault C."/>
            <person name="Tolstrup N."/>
            <person name="Charlebois R.L."/>
            <person name="Doolittle W.F."/>
            <person name="Duguet M."/>
            <person name="Gaasterland T."/>
            <person name="Garrett R.A."/>
            <person name="Ragan M.A."/>
            <person name="Sensen C.W."/>
            <person name="Van der Oost J."/>
        </authorList>
    </citation>
    <scope>NUCLEOTIDE SEQUENCE [LARGE SCALE GENOMIC DNA]</scope>
    <source>
        <strain>ATCC 35092 / DSM 1617 / JCM 11322 / P2</strain>
    </source>
</reference>